<organism>
    <name type="scientific">Oryza sativa subsp. indica</name>
    <name type="common">Rice</name>
    <dbReference type="NCBI Taxonomy" id="39946"/>
    <lineage>
        <taxon>Eukaryota</taxon>
        <taxon>Viridiplantae</taxon>
        <taxon>Streptophyta</taxon>
        <taxon>Embryophyta</taxon>
        <taxon>Tracheophyta</taxon>
        <taxon>Spermatophyta</taxon>
        <taxon>Magnoliopsida</taxon>
        <taxon>Liliopsida</taxon>
        <taxon>Poales</taxon>
        <taxon>Poaceae</taxon>
        <taxon>BOP clade</taxon>
        <taxon>Oryzoideae</taxon>
        <taxon>Oryzeae</taxon>
        <taxon>Oryzinae</taxon>
        <taxon>Oryza</taxon>
        <taxon>Oryza sativa</taxon>
    </lineage>
</organism>
<sequence length="284" mass="29440">MEPSPDAPRAGAAEEQPGPSSSASAPAPAASSNEEEGRHQSQAQQQVQEAQPQPLAQQAPAAAGLSRYESQKRRDWNTFLQYLRNHKPPLTLPRCSGAHVIEFLKYLDQFGKTKVHADGCAYFGEPNPPAPCACPLRQAWGSLDALIGRLRAAYEESGGRPESNPFAARAVRIYLREVREAQAKARGIPYEKKRKRGAAAAAAAPPVVVAPPPVVTAPDDATGTSGGAGEDDDDDEATHSGEQQDTTPAASPTTPPATSVGTTTAAATAAAAKGSAAKGSATSS</sequence>
<name>G1L9_ORYSI</name>
<comment type="function">
    <text evidence="1">Probable transcription regulator that acts as a developmental regulator by promoting cell growth in response to light.</text>
</comment>
<comment type="subcellular location">
    <subcellularLocation>
        <location evidence="1">Nucleus</location>
    </subcellularLocation>
</comment>
<comment type="similarity">
    <text evidence="4">Belongs to the plant homeotic and developmental regulators ALOG protein family.</text>
</comment>
<keyword id="KW-0217">Developmental protein</keyword>
<keyword id="KW-0238">DNA-binding</keyword>
<keyword id="KW-0539">Nucleus</keyword>
<keyword id="KW-1185">Reference proteome</keyword>
<keyword id="KW-0804">Transcription</keyword>
<keyword id="KW-0805">Transcription regulation</keyword>
<protein>
    <recommendedName>
        <fullName>Protein G1-like9</fullName>
    </recommendedName>
</protein>
<gene>
    <name type="ORF">OsI_19565</name>
</gene>
<feature type="chain" id="PRO_0000425315" description="Protein G1-like9">
    <location>
        <begin position="1"/>
        <end position="284"/>
    </location>
</feature>
<feature type="domain" description="ALOG" evidence="2">
    <location>
        <begin position="67"/>
        <end position="194"/>
    </location>
</feature>
<feature type="region of interest" description="Disordered" evidence="3">
    <location>
        <begin position="1"/>
        <end position="69"/>
    </location>
</feature>
<feature type="region of interest" description="Disordered" evidence="3">
    <location>
        <begin position="209"/>
        <end position="284"/>
    </location>
</feature>
<feature type="short sequence motif" description="Nuclear localization signal" evidence="1">
    <location>
        <begin position="192"/>
        <end position="196"/>
    </location>
</feature>
<feature type="compositionally biased region" description="Low complexity" evidence="3">
    <location>
        <begin position="13"/>
        <end position="32"/>
    </location>
</feature>
<feature type="compositionally biased region" description="Low complexity" evidence="3">
    <location>
        <begin position="40"/>
        <end position="63"/>
    </location>
</feature>
<feature type="compositionally biased region" description="Low complexity" evidence="3">
    <location>
        <begin position="246"/>
        <end position="284"/>
    </location>
</feature>
<dbReference type="EMBL" id="CM000130">
    <property type="protein sequence ID" value="EAY97642.1"/>
    <property type="molecule type" value="Genomic_DNA"/>
</dbReference>
<dbReference type="SMR" id="A2Y3I2"/>
<dbReference type="STRING" id="39946.A2Y3I2"/>
<dbReference type="EnsemblPlants" id="BGIOSGA018242-TA">
    <property type="protein sequence ID" value="BGIOSGA018242-PA"/>
    <property type="gene ID" value="BGIOSGA018242"/>
</dbReference>
<dbReference type="EnsemblPlants" id="OsGoSa_05g0012980.01">
    <property type="protein sequence ID" value="OsGoSa_05g0012980.01"/>
    <property type="gene ID" value="OsGoSa_05g0012980"/>
</dbReference>
<dbReference type="EnsemblPlants" id="OsMH63_05G013040_01">
    <property type="protein sequence ID" value="OsMH63_05G013040_01"/>
    <property type="gene ID" value="OsMH63_05G013040"/>
</dbReference>
<dbReference type="Gramene" id="BGIOSGA018242-TA">
    <property type="protein sequence ID" value="BGIOSGA018242-PA"/>
    <property type="gene ID" value="BGIOSGA018242"/>
</dbReference>
<dbReference type="Gramene" id="OsGoSa_05g0012980.01">
    <property type="protein sequence ID" value="OsGoSa_05g0012980.01"/>
    <property type="gene ID" value="OsGoSa_05g0012980"/>
</dbReference>
<dbReference type="Gramene" id="OsMH63_05G013040_01">
    <property type="protein sequence ID" value="OsMH63_05G013040_01"/>
    <property type="gene ID" value="OsMH63_05G013040"/>
</dbReference>
<dbReference type="HOGENOM" id="CLU_071168_2_1_1"/>
<dbReference type="OrthoDB" id="1906822at2759"/>
<dbReference type="Proteomes" id="UP000007015">
    <property type="component" value="Chromosome 5"/>
</dbReference>
<dbReference type="GO" id="GO:0005634">
    <property type="term" value="C:nucleus"/>
    <property type="evidence" value="ECO:0000250"/>
    <property type="project" value="UniProtKB"/>
</dbReference>
<dbReference type="GO" id="GO:0003677">
    <property type="term" value="F:DNA binding"/>
    <property type="evidence" value="ECO:0007669"/>
    <property type="project" value="UniProtKB-KW"/>
</dbReference>
<dbReference type="GO" id="GO:0009299">
    <property type="term" value="P:mRNA transcription"/>
    <property type="evidence" value="ECO:0000250"/>
    <property type="project" value="UniProtKB"/>
</dbReference>
<dbReference type="GO" id="GO:0090698">
    <property type="term" value="P:post-embryonic plant morphogenesis"/>
    <property type="evidence" value="ECO:0000250"/>
    <property type="project" value="UniProtKB"/>
</dbReference>
<dbReference type="GO" id="GO:0009416">
    <property type="term" value="P:response to light stimulus"/>
    <property type="evidence" value="ECO:0007669"/>
    <property type="project" value="TreeGrafter"/>
</dbReference>
<dbReference type="InterPro" id="IPR040222">
    <property type="entry name" value="ALOG"/>
</dbReference>
<dbReference type="InterPro" id="IPR006936">
    <property type="entry name" value="ALOG_dom"/>
</dbReference>
<dbReference type="PANTHER" id="PTHR31165">
    <property type="entry name" value="PROTEIN G1-LIKE2"/>
    <property type="match status" value="1"/>
</dbReference>
<dbReference type="PANTHER" id="PTHR31165:SF59">
    <property type="entry name" value="PROTEIN LIGHT-DEPENDENT SHORT HYPOCOTYLS 6"/>
    <property type="match status" value="1"/>
</dbReference>
<dbReference type="Pfam" id="PF04852">
    <property type="entry name" value="ALOG_dom"/>
    <property type="match status" value="1"/>
</dbReference>
<dbReference type="PROSITE" id="PS51697">
    <property type="entry name" value="ALOG"/>
    <property type="match status" value="1"/>
</dbReference>
<evidence type="ECO:0000250" key="1"/>
<evidence type="ECO:0000255" key="2">
    <source>
        <dbReference type="PROSITE-ProRule" id="PRU01033"/>
    </source>
</evidence>
<evidence type="ECO:0000256" key="3">
    <source>
        <dbReference type="SAM" id="MobiDB-lite"/>
    </source>
</evidence>
<evidence type="ECO:0000305" key="4"/>
<reference key="1">
    <citation type="journal article" date="2005" name="PLoS Biol.">
        <title>The genomes of Oryza sativa: a history of duplications.</title>
        <authorList>
            <person name="Yu J."/>
            <person name="Wang J."/>
            <person name="Lin W."/>
            <person name="Li S."/>
            <person name="Li H."/>
            <person name="Zhou J."/>
            <person name="Ni P."/>
            <person name="Dong W."/>
            <person name="Hu S."/>
            <person name="Zeng C."/>
            <person name="Zhang J."/>
            <person name="Zhang Y."/>
            <person name="Li R."/>
            <person name="Xu Z."/>
            <person name="Li S."/>
            <person name="Li X."/>
            <person name="Zheng H."/>
            <person name="Cong L."/>
            <person name="Lin L."/>
            <person name="Yin J."/>
            <person name="Geng J."/>
            <person name="Li G."/>
            <person name="Shi J."/>
            <person name="Liu J."/>
            <person name="Lv H."/>
            <person name="Li J."/>
            <person name="Wang J."/>
            <person name="Deng Y."/>
            <person name="Ran L."/>
            <person name="Shi X."/>
            <person name="Wang X."/>
            <person name="Wu Q."/>
            <person name="Li C."/>
            <person name="Ren X."/>
            <person name="Wang J."/>
            <person name="Wang X."/>
            <person name="Li D."/>
            <person name="Liu D."/>
            <person name="Zhang X."/>
            <person name="Ji Z."/>
            <person name="Zhao W."/>
            <person name="Sun Y."/>
            <person name="Zhang Z."/>
            <person name="Bao J."/>
            <person name="Han Y."/>
            <person name="Dong L."/>
            <person name="Ji J."/>
            <person name="Chen P."/>
            <person name="Wu S."/>
            <person name="Liu J."/>
            <person name="Xiao Y."/>
            <person name="Bu D."/>
            <person name="Tan J."/>
            <person name="Yang L."/>
            <person name="Ye C."/>
            <person name="Zhang J."/>
            <person name="Xu J."/>
            <person name="Zhou Y."/>
            <person name="Yu Y."/>
            <person name="Zhang B."/>
            <person name="Zhuang S."/>
            <person name="Wei H."/>
            <person name="Liu B."/>
            <person name="Lei M."/>
            <person name="Yu H."/>
            <person name="Li Y."/>
            <person name="Xu H."/>
            <person name="Wei S."/>
            <person name="He X."/>
            <person name="Fang L."/>
            <person name="Zhang Z."/>
            <person name="Zhang Y."/>
            <person name="Huang X."/>
            <person name="Su Z."/>
            <person name="Tong W."/>
            <person name="Li J."/>
            <person name="Tong Z."/>
            <person name="Li S."/>
            <person name="Ye J."/>
            <person name="Wang L."/>
            <person name="Fang L."/>
            <person name="Lei T."/>
            <person name="Chen C.-S."/>
            <person name="Chen H.-C."/>
            <person name="Xu Z."/>
            <person name="Li H."/>
            <person name="Huang H."/>
            <person name="Zhang F."/>
            <person name="Xu H."/>
            <person name="Li N."/>
            <person name="Zhao C."/>
            <person name="Li S."/>
            <person name="Dong L."/>
            <person name="Huang Y."/>
            <person name="Li L."/>
            <person name="Xi Y."/>
            <person name="Qi Q."/>
            <person name="Li W."/>
            <person name="Zhang B."/>
            <person name="Hu W."/>
            <person name="Zhang Y."/>
            <person name="Tian X."/>
            <person name="Jiao Y."/>
            <person name="Liang X."/>
            <person name="Jin J."/>
            <person name="Gao L."/>
            <person name="Zheng W."/>
            <person name="Hao B."/>
            <person name="Liu S.-M."/>
            <person name="Wang W."/>
            <person name="Yuan L."/>
            <person name="Cao M."/>
            <person name="McDermott J."/>
            <person name="Samudrala R."/>
            <person name="Wang J."/>
            <person name="Wong G.K.-S."/>
            <person name="Yang H."/>
        </authorList>
    </citation>
    <scope>NUCLEOTIDE SEQUENCE [LARGE SCALE GENOMIC DNA]</scope>
    <source>
        <strain>cv. 93-11</strain>
    </source>
</reference>
<accession>A2Y3I2</accession>
<proteinExistence type="inferred from homology"/>